<gene>
    <name evidence="1" type="primary">rsmG</name>
    <name type="ordered locus">STY3905</name>
    <name type="ordered locus">t3646</name>
</gene>
<evidence type="ECO:0000255" key="1">
    <source>
        <dbReference type="HAMAP-Rule" id="MF_00074"/>
    </source>
</evidence>
<comment type="function">
    <text evidence="1">Specifically methylates the N7 position of guanine in position 527 of 16S rRNA.</text>
</comment>
<comment type="catalytic activity">
    <reaction evidence="1">
        <text>guanosine(527) in 16S rRNA + S-adenosyl-L-methionine = N(7)-methylguanosine(527) in 16S rRNA + S-adenosyl-L-homocysteine</text>
        <dbReference type="Rhea" id="RHEA:42732"/>
        <dbReference type="Rhea" id="RHEA-COMP:10209"/>
        <dbReference type="Rhea" id="RHEA-COMP:10210"/>
        <dbReference type="ChEBI" id="CHEBI:57856"/>
        <dbReference type="ChEBI" id="CHEBI:59789"/>
        <dbReference type="ChEBI" id="CHEBI:74269"/>
        <dbReference type="ChEBI" id="CHEBI:74480"/>
        <dbReference type="EC" id="2.1.1.170"/>
    </reaction>
</comment>
<comment type="subcellular location">
    <subcellularLocation>
        <location evidence="1">Cytoplasm</location>
    </subcellularLocation>
</comment>
<comment type="similarity">
    <text evidence="1">Belongs to the methyltransferase superfamily. RNA methyltransferase RsmG family.</text>
</comment>
<name>RSMG_SALTI</name>
<organism>
    <name type="scientific">Salmonella typhi</name>
    <dbReference type="NCBI Taxonomy" id="90370"/>
    <lineage>
        <taxon>Bacteria</taxon>
        <taxon>Pseudomonadati</taxon>
        <taxon>Pseudomonadota</taxon>
        <taxon>Gammaproteobacteria</taxon>
        <taxon>Enterobacterales</taxon>
        <taxon>Enterobacteriaceae</taxon>
        <taxon>Salmonella</taxon>
    </lineage>
</organism>
<keyword id="KW-0963">Cytoplasm</keyword>
<keyword id="KW-0489">Methyltransferase</keyword>
<keyword id="KW-0698">rRNA processing</keyword>
<keyword id="KW-0949">S-adenosyl-L-methionine</keyword>
<keyword id="KW-0808">Transferase</keyword>
<proteinExistence type="inferred from homology"/>
<protein>
    <recommendedName>
        <fullName evidence="1">Ribosomal RNA small subunit methyltransferase G</fullName>
        <ecNumber evidence="1">2.1.1.170</ecNumber>
    </recommendedName>
    <alternativeName>
        <fullName evidence="1">16S rRNA 7-methylguanosine methyltransferase</fullName>
        <shortName evidence="1">16S rRNA m7G methyltransferase</shortName>
    </alternativeName>
</protein>
<sequence length="207" mass="23175">MLNKLSRLLADAGISLTDHQKTLLVAYVDMLHKWNKAYNLTSVRDPNEMLVRHILDSIVVAPYLQGQRFIDVGTGPGLPGIPLAIVLPDAHFTLLDSLGKRVRFLRQVQHELKLENITPVQSRVEAYPSEPPFDGVISRAFASLNDMVSWCHHLPGEKGRFYALKGQLPGDEIASLPDNFSVESVEKLRVPQLEGERHLVIIKSNKV</sequence>
<dbReference type="EC" id="2.1.1.170" evidence="1"/>
<dbReference type="EMBL" id="AL513382">
    <property type="protein sequence ID" value="CAD03122.1"/>
    <property type="molecule type" value="Genomic_DNA"/>
</dbReference>
<dbReference type="EMBL" id="AE014613">
    <property type="protein sequence ID" value="AAO71143.1"/>
    <property type="molecule type" value="Genomic_DNA"/>
</dbReference>
<dbReference type="RefSeq" id="NP_458070.1">
    <property type="nucleotide sequence ID" value="NC_003198.1"/>
</dbReference>
<dbReference type="RefSeq" id="WP_001519938.1">
    <property type="nucleotide sequence ID" value="NZ_WSUR01000023.1"/>
</dbReference>
<dbReference type="SMR" id="P64238"/>
<dbReference type="STRING" id="220341.gene:17587765"/>
<dbReference type="KEGG" id="stt:t3646"/>
<dbReference type="KEGG" id="sty:STY3905"/>
<dbReference type="PATRIC" id="fig|220341.7.peg.3985"/>
<dbReference type="eggNOG" id="COG0357">
    <property type="taxonomic scope" value="Bacteria"/>
</dbReference>
<dbReference type="HOGENOM" id="CLU_065341_2_2_6"/>
<dbReference type="OMA" id="AGMPNKK"/>
<dbReference type="OrthoDB" id="9808773at2"/>
<dbReference type="Proteomes" id="UP000000541">
    <property type="component" value="Chromosome"/>
</dbReference>
<dbReference type="Proteomes" id="UP000002670">
    <property type="component" value="Chromosome"/>
</dbReference>
<dbReference type="GO" id="GO:0005829">
    <property type="term" value="C:cytosol"/>
    <property type="evidence" value="ECO:0007669"/>
    <property type="project" value="TreeGrafter"/>
</dbReference>
<dbReference type="GO" id="GO:0070043">
    <property type="term" value="F:rRNA (guanine-N7-)-methyltransferase activity"/>
    <property type="evidence" value="ECO:0007669"/>
    <property type="project" value="UniProtKB-UniRule"/>
</dbReference>
<dbReference type="CDD" id="cd02440">
    <property type="entry name" value="AdoMet_MTases"/>
    <property type="match status" value="1"/>
</dbReference>
<dbReference type="FunFam" id="3.40.50.150:FF:000032">
    <property type="entry name" value="Ribosomal RNA small subunit methyltransferase G"/>
    <property type="match status" value="1"/>
</dbReference>
<dbReference type="Gene3D" id="3.40.50.150">
    <property type="entry name" value="Vaccinia Virus protein VP39"/>
    <property type="match status" value="1"/>
</dbReference>
<dbReference type="HAMAP" id="MF_00074">
    <property type="entry name" value="16SrRNA_methyltr_G"/>
    <property type="match status" value="1"/>
</dbReference>
<dbReference type="InterPro" id="IPR003682">
    <property type="entry name" value="rRNA_ssu_MeTfrase_G"/>
</dbReference>
<dbReference type="InterPro" id="IPR029063">
    <property type="entry name" value="SAM-dependent_MTases_sf"/>
</dbReference>
<dbReference type="NCBIfam" id="TIGR00138">
    <property type="entry name" value="rsmG_gidB"/>
    <property type="match status" value="1"/>
</dbReference>
<dbReference type="PANTHER" id="PTHR31760">
    <property type="entry name" value="S-ADENOSYL-L-METHIONINE-DEPENDENT METHYLTRANSFERASES SUPERFAMILY PROTEIN"/>
    <property type="match status" value="1"/>
</dbReference>
<dbReference type="PANTHER" id="PTHR31760:SF0">
    <property type="entry name" value="S-ADENOSYL-L-METHIONINE-DEPENDENT METHYLTRANSFERASES SUPERFAMILY PROTEIN"/>
    <property type="match status" value="1"/>
</dbReference>
<dbReference type="Pfam" id="PF02527">
    <property type="entry name" value="GidB"/>
    <property type="match status" value="1"/>
</dbReference>
<dbReference type="PIRSF" id="PIRSF003078">
    <property type="entry name" value="GidB"/>
    <property type="match status" value="1"/>
</dbReference>
<dbReference type="SUPFAM" id="SSF53335">
    <property type="entry name" value="S-adenosyl-L-methionine-dependent methyltransferases"/>
    <property type="match status" value="1"/>
</dbReference>
<accession>P64238</accession>
<accession>Q8XFW0</accession>
<feature type="chain" id="PRO_0000184323" description="Ribosomal RNA small subunit methyltransferase G">
    <location>
        <begin position="1"/>
        <end position="207"/>
    </location>
</feature>
<feature type="binding site" evidence="1">
    <location>
        <position position="73"/>
    </location>
    <ligand>
        <name>S-adenosyl-L-methionine</name>
        <dbReference type="ChEBI" id="CHEBI:59789"/>
    </ligand>
</feature>
<feature type="binding site" evidence="1">
    <location>
        <position position="78"/>
    </location>
    <ligand>
        <name>S-adenosyl-L-methionine</name>
        <dbReference type="ChEBI" id="CHEBI:59789"/>
    </ligand>
</feature>
<feature type="binding site" evidence="1">
    <location>
        <begin position="124"/>
        <end position="125"/>
    </location>
    <ligand>
        <name>S-adenosyl-L-methionine</name>
        <dbReference type="ChEBI" id="CHEBI:59789"/>
    </ligand>
</feature>
<feature type="binding site" evidence="1">
    <location>
        <position position="139"/>
    </location>
    <ligand>
        <name>S-adenosyl-L-methionine</name>
        <dbReference type="ChEBI" id="CHEBI:59789"/>
    </ligand>
</feature>
<reference key="1">
    <citation type="journal article" date="2001" name="Nature">
        <title>Complete genome sequence of a multiple drug resistant Salmonella enterica serovar Typhi CT18.</title>
        <authorList>
            <person name="Parkhill J."/>
            <person name="Dougan G."/>
            <person name="James K.D."/>
            <person name="Thomson N.R."/>
            <person name="Pickard D."/>
            <person name="Wain J."/>
            <person name="Churcher C.M."/>
            <person name="Mungall K.L."/>
            <person name="Bentley S.D."/>
            <person name="Holden M.T.G."/>
            <person name="Sebaihia M."/>
            <person name="Baker S."/>
            <person name="Basham D."/>
            <person name="Brooks K."/>
            <person name="Chillingworth T."/>
            <person name="Connerton P."/>
            <person name="Cronin A."/>
            <person name="Davis P."/>
            <person name="Davies R.M."/>
            <person name="Dowd L."/>
            <person name="White N."/>
            <person name="Farrar J."/>
            <person name="Feltwell T."/>
            <person name="Hamlin N."/>
            <person name="Haque A."/>
            <person name="Hien T.T."/>
            <person name="Holroyd S."/>
            <person name="Jagels K."/>
            <person name="Krogh A."/>
            <person name="Larsen T.S."/>
            <person name="Leather S."/>
            <person name="Moule S."/>
            <person name="O'Gaora P."/>
            <person name="Parry C."/>
            <person name="Quail M.A."/>
            <person name="Rutherford K.M."/>
            <person name="Simmonds M."/>
            <person name="Skelton J."/>
            <person name="Stevens K."/>
            <person name="Whitehead S."/>
            <person name="Barrell B.G."/>
        </authorList>
    </citation>
    <scope>NUCLEOTIDE SEQUENCE [LARGE SCALE GENOMIC DNA]</scope>
    <source>
        <strain>CT18</strain>
    </source>
</reference>
<reference key="2">
    <citation type="journal article" date="2003" name="J. Bacteriol.">
        <title>Comparative genomics of Salmonella enterica serovar Typhi strains Ty2 and CT18.</title>
        <authorList>
            <person name="Deng W."/>
            <person name="Liou S.-R."/>
            <person name="Plunkett G. III"/>
            <person name="Mayhew G.F."/>
            <person name="Rose D.J."/>
            <person name="Burland V."/>
            <person name="Kodoyianni V."/>
            <person name="Schwartz D.C."/>
            <person name="Blattner F.R."/>
        </authorList>
    </citation>
    <scope>NUCLEOTIDE SEQUENCE [LARGE SCALE GENOMIC DNA]</scope>
    <source>
        <strain>ATCC 700931 / Ty2</strain>
    </source>
</reference>